<accession>J5J7Y8</accession>
<keyword id="KW-0147">Chitin-binding</keyword>
<keyword id="KW-1185">Reference proteome</keyword>
<keyword id="KW-0677">Repeat</keyword>
<keyword id="KW-0732">Signal</keyword>
<keyword id="KW-0843">Virulence</keyword>
<reference key="1">
    <citation type="journal article" date="2012" name="Sci. Rep.">
        <title>Genomic perspectives on the evolution of fungal entomopathogenicity in Beauveria bassiana.</title>
        <authorList>
            <person name="Xiao G."/>
            <person name="Ying S.-H."/>
            <person name="Zheng P."/>
            <person name="Wang Z.-L."/>
            <person name="Zhang S."/>
            <person name="Xie X.-Q."/>
            <person name="Shang Y."/>
            <person name="St Leger R.J."/>
            <person name="Zhao G.-P."/>
            <person name="Wang C."/>
            <person name="Feng M.-G."/>
        </authorList>
    </citation>
    <scope>NUCLEOTIDE SEQUENCE [LARGE SCALE GENOMIC DNA]</scope>
    <source>
        <strain>ARSEF 2860</strain>
    </source>
</reference>
<reference key="2">
    <citation type="journal article" date="2017" name="PLoS Pathog.">
        <title>Divergent LysM effectors contribute to the virulence of Beauveria bassiana by evasion of insect immune defenses.</title>
        <authorList>
            <person name="Cen K."/>
            <person name="Li B."/>
            <person name="Lu Y."/>
            <person name="Zhang S."/>
            <person name="Wang C."/>
        </authorList>
    </citation>
    <scope>FUNCTION</scope>
    <scope>INDUCTION</scope>
    <scope>DISRUPTION PHENOTYPE</scope>
</reference>
<name>LYSM5_BEAB2</name>
<feature type="signal peptide" evidence="1">
    <location>
        <begin position="1"/>
        <end position="19"/>
    </location>
</feature>
<feature type="chain" id="PRO_5003784495" description="Secreted LysM effector Blys5">
    <location>
        <begin position="20"/>
        <end position="169"/>
    </location>
</feature>
<feature type="domain" description="LysM 1" evidence="2">
    <location>
        <begin position="47"/>
        <end position="94"/>
    </location>
</feature>
<feature type="domain" description="LysM 2" evidence="2">
    <location>
        <begin position="121"/>
        <end position="167"/>
    </location>
</feature>
<sequence>MKLSVISAVFVSLAAAAAAKTTPTREVAAAAAVPDPVQDGIAKNCKTYYQAKPGDSCQKIVNDYGVFTFGDFFKWNPAVGKNCESLLGGWYYCVGVPGTPSKCTEKHPTPTQPGSACKCGQWYKVKKGDNCQALEKKFKISDKDFRKLNGGLNKECSNLQADVNVCVKA</sequence>
<gene>
    <name evidence="4" type="primary">Blys5</name>
    <name type="ORF">BBA_08602</name>
</gene>
<evidence type="ECO:0000255" key="1"/>
<evidence type="ECO:0000255" key="2">
    <source>
        <dbReference type="PROSITE-ProRule" id="PRU01118"/>
    </source>
</evidence>
<evidence type="ECO:0000269" key="3">
    <source>
    </source>
</evidence>
<evidence type="ECO:0000303" key="4">
    <source>
    </source>
</evidence>
<evidence type="ECO:0000305" key="5"/>
<evidence type="ECO:0000305" key="6">
    <source>
    </source>
</evidence>
<proteinExistence type="evidence at transcript level"/>
<comment type="function">
    <text evidence="3">Secreted effector that enables the plant pathogenic fungus to manipulate host defenses for successful infection (PubMed:28873459). Required for the full virulence to infect insect hosts (PubMed:28873459). Protects fungal hyphae against the hydrolytic activity of chitinase and plays an important role in evasion of insect immunities (PubMed:28873459). Binds chitin and can additionally bind chitosan and cellulose (PubMed:28873459). Coats and protects the cell walls of insect pathogens from host cell recognition and additionally shields fungal cells from the hydrolysis of insect chitinases (PubMed:28873459).</text>
</comment>
<comment type="induction">
    <text evidence="3">Expressed during in vivo infection of insect hosts.</text>
</comment>
<comment type="domain">
    <text evidence="6">The LysM (lysin motif) domains are small globular domains involved in binding chitin in eukaryotes. Blys5 contains 2 LysM domains.</text>
</comment>
<comment type="disruption phenotype">
    <text evidence="3">Lead to relative tolerance against H(2)O(2)-induced oxidative stress (PubMed:28873459). Impaired fungal virulence in both injection and topical infection bioassays using the last instar larvae of the wax moth Galleria mellonella (PubMed:28873459). Impairs fungal propagations and ability in suppressing immune responses in insects (PubMed:28873459).</text>
</comment>
<comment type="miscellaneous">
    <text evidence="5">In plants, chitin acts as a microbe-associated molecular pattern (MAMP) that is recognized by lysin motif (LysM)-containing plant cell surface-localized pattern recognition receptors (PRRs) that activate a plethora of downstream immune responses.</text>
</comment>
<comment type="similarity">
    <text evidence="5">Belongs to the secreted LysM effector family.</text>
</comment>
<dbReference type="EMBL" id="JH725185">
    <property type="protein sequence ID" value="EJP62518.1"/>
    <property type="molecule type" value="Genomic_DNA"/>
</dbReference>
<dbReference type="RefSeq" id="XP_008601921.1">
    <property type="nucleotide sequence ID" value="XM_008603699.1"/>
</dbReference>
<dbReference type="SMR" id="J5J7Y8"/>
<dbReference type="STRING" id="655819.J5J7Y8"/>
<dbReference type="GeneID" id="19891614"/>
<dbReference type="HOGENOM" id="CLU_010591_1_0_1"/>
<dbReference type="InParanoid" id="J5J7Y8"/>
<dbReference type="OrthoDB" id="2859at474943"/>
<dbReference type="PHI-base" id="PHI:7378"/>
<dbReference type="Proteomes" id="UP000002762">
    <property type="component" value="Unassembled WGS sequence"/>
</dbReference>
<dbReference type="GO" id="GO:0008061">
    <property type="term" value="F:chitin binding"/>
    <property type="evidence" value="ECO:0007669"/>
    <property type="project" value="UniProtKB-KW"/>
</dbReference>
<dbReference type="CDD" id="cd00118">
    <property type="entry name" value="LysM"/>
    <property type="match status" value="2"/>
</dbReference>
<dbReference type="Gene3D" id="3.10.350.10">
    <property type="entry name" value="LysM domain"/>
    <property type="match status" value="2"/>
</dbReference>
<dbReference type="InterPro" id="IPR052210">
    <property type="entry name" value="LysM1-like"/>
</dbReference>
<dbReference type="InterPro" id="IPR018392">
    <property type="entry name" value="LysM_dom"/>
</dbReference>
<dbReference type="InterPro" id="IPR036779">
    <property type="entry name" value="LysM_dom_sf"/>
</dbReference>
<dbReference type="PANTHER" id="PTHR34997">
    <property type="entry name" value="AM15"/>
    <property type="match status" value="1"/>
</dbReference>
<dbReference type="PANTHER" id="PTHR34997:SF1">
    <property type="entry name" value="PEPTIDOGLYCAN-BINDING LYSIN DOMAIN"/>
    <property type="match status" value="1"/>
</dbReference>
<dbReference type="Pfam" id="PF01476">
    <property type="entry name" value="LysM"/>
    <property type="match status" value="1"/>
</dbReference>
<dbReference type="SMART" id="SM00257">
    <property type="entry name" value="LysM"/>
    <property type="match status" value="2"/>
</dbReference>
<dbReference type="SUPFAM" id="SSF54106">
    <property type="entry name" value="LysM domain"/>
    <property type="match status" value="2"/>
</dbReference>
<dbReference type="PROSITE" id="PS51782">
    <property type="entry name" value="LYSM"/>
    <property type="match status" value="2"/>
</dbReference>
<organism>
    <name type="scientific">Beauveria bassiana (strain ARSEF 2860)</name>
    <name type="common">White muscardine disease fungus</name>
    <name type="synonym">Tritirachium shiotae</name>
    <dbReference type="NCBI Taxonomy" id="655819"/>
    <lineage>
        <taxon>Eukaryota</taxon>
        <taxon>Fungi</taxon>
        <taxon>Dikarya</taxon>
        <taxon>Ascomycota</taxon>
        <taxon>Pezizomycotina</taxon>
        <taxon>Sordariomycetes</taxon>
        <taxon>Hypocreomycetidae</taxon>
        <taxon>Hypocreales</taxon>
        <taxon>Cordycipitaceae</taxon>
        <taxon>Beauveria</taxon>
    </lineage>
</organism>
<protein>
    <recommendedName>
        <fullName evidence="4">Secreted LysM effector Blys5</fullName>
    </recommendedName>
    <alternativeName>
        <fullName evidence="4">LysM domain-containing protein 5</fullName>
    </alternativeName>
</protein>